<proteinExistence type="evidence at transcript level"/>
<comment type="function">
    <text evidence="1">Cysteine hydrolase.</text>
</comment>
<comment type="subcellular location">
    <subcellularLocation>
        <location evidence="1">Cytoplasm</location>
        <location evidence="1">Cytosol</location>
    </subcellularLocation>
</comment>
<comment type="similarity">
    <text evidence="3">Belongs to the dienelactone hydrolase family.</text>
</comment>
<gene>
    <name type="primary">CMBL</name>
</gene>
<keyword id="KW-0007">Acetylation</keyword>
<keyword id="KW-0963">Cytoplasm</keyword>
<keyword id="KW-0378">Hydrolase</keyword>
<keyword id="KW-0597">Phosphoprotein</keyword>
<keyword id="KW-1185">Reference proteome</keyword>
<feature type="initiator methionine" description="Removed" evidence="2">
    <location>
        <position position="1"/>
    </location>
</feature>
<feature type="chain" id="PRO_0000308190" description="Carboxymethylenebutenolidase homolog">
    <location>
        <begin position="2"/>
        <end position="245"/>
    </location>
</feature>
<feature type="active site" evidence="1">
    <location>
        <position position="132"/>
    </location>
</feature>
<feature type="active site" evidence="1">
    <location>
        <position position="179"/>
    </location>
</feature>
<feature type="active site" evidence="1">
    <location>
        <position position="212"/>
    </location>
</feature>
<feature type="modified residue" description="N-acetylalanine" evidence="2">
    <location>
        <position position="2"/>
    </location>
</feature>
<feature type="modified residue" description="N6-acetyllysine" evidence="2">
    <location>
        <position position="36"/>
    </location>
</feature>
<feature type="modified residue" description="Phosphoserine" evidence="2">
    <location>
        <position position="223"/>
    </location>
</feature>
<organism>
    <name type="scientific">Pongo abelii</name>
    <name type="common">Sumatran orangutan</name>
    <name type="synonym">Pongo pygmaeus abelii</name>
    <dbReference type="NCBI Taxonomy" id="9601"/>
    <lineage>
        <taxon>Eukaryota</taxon>
        <taxon>Metazoa</taxon>
        <taxon>Chordata</taxon>
        <taxon>Craniata</taxon>
        <taxon>Vertebrata</taxon>
        <taxon>Euteleostomi</taxon>
        <taxon>Mammalia</taxon>
        <taxon>Eutheria</taxon>
        <taxon>Euarchontoglires</taxon>
        <taxon>Primates</taxon>
        <taxon>Haplorrhini</taxon>
        <taxon>Catarrhini</taxon>
        <taxon>Hominidae</taxon>
        <taxon>Pongo</taxon>
    </lineage>
</organism>
<evidence type="ECO:0000250" key="1"/>
<evidence type="ECO:0000250" key="2">
    <source>
        <dbReference type="UniProtKB" id="Q96DG6"/>
    </source>
</evidence>
<evidence type="ECO:0000305" key="3"/>
<name>CMBL_PONAB</name>
<protein>
    <recommendedName>
        <fullName>Carboxymethylenebutenolidase homolog</fullName>
        <ecNumber>3.1.-.-</ecNumber>
    </recommendedName>
</protein>
<accession>Q5RBU3</accession>
<sequence length="245" mass="28078">MANEAYPCPCDIGHRLEYGGLGREVQVEHIKAYVTKSPVDAGKAVIVIQDIFGWQLPNTRYMADMISGNGYTTIVPDFFVGQEPWDPSGDWSIFPEWLKTRNAQKIDREISAILKYLKQQCHAQKIGIVGFCWGGIAVHHLMMKYSEFRAGVSVYGIVKDSEDIYNLKNPTLFIFAENDVVIPLKDVSLLTQKLKEHCKVEYQIKTFSGQTHGFVHRKREDCSPADKPYIDEARRNLIEWLNKYM</sequence>
<reference key="1">
    <citation type="submission" date="2004-11" db="EMBL/GenBank/DDBJ databases">
        <authorList>
            <consortium name="The German cDNA consortium"/>
        </authorList>
    </citation>
    <scope>NUCLEOTIDE SEQUENCE [LARGE SCALE MRNA]</scope>
    <source>
        <tissue>Kidney</tissue>
    </source>
</reference>
<dbReference type="EC" id="3.1.-.-"/>
<dbReference type="EMBL" id="CR858540">
    <property type="protein sequence ID" value="CAH90767.1"/>
    <property type="molecule type" value="mRNA"/>
</dbReference>
<dbReference type="RefSeq" id="NP_001125430.1">
    <property type="nucleotide sequence ID" value="NM_001131958.1"/>
</dbReference>
<dbReference type="RefSeq" id="XP_063579942.1">
    <property type="nucleotide sequence ID" value="XM_063723872.1"/>
</dbReference>
<dbReference type="SMR" id="Q5RBU3"/>
<dbReference type="FunCoup" id="Q5RBU3">
    <property type="interactions" value="542"/>
</dbReference>
<dbReference type="STRING" id="9601.ENSPPYP00000017140"/>
<dbReference type="ESTHER" id="ponpy-q5rbu3">
    <property type="family name" value="CMBL"/>
</dbReference>
<dbReference type="Ensembl" id="ENSPPYT00000017835.2">
    <property type="protein sequence ID" value="ENSPPYP00000017140.1"/>
    <property type="gene ID" value="ENSPPYG00000015343.2"/>
</dbReference>
<dbReference type="GeneID" id="100172338"/>
<dbReference type="KEGG" id="pon:100172338"/>
<dbReference type="CTD" id="134147"/>
<dbReference type="eggNOG" id="KOG3043">
    <property type="taxonomic scope" value="Eukaryota"/>
</dbReference>
<dbReference type="GeneTree" id="ENSGT00390000000183"/>
<dbReference type="HOGENOM" id="CLU_054590_8_2_1"/>
<dbReference type="InParanoid" id="Q5RBU3"/>
<dbReference type="OMA" id="QCGAKHI"/>
<dbReference type="OrthoDB" id="17560at2759"/>
<dbReference type="TreeFam" id="TF331795"/>
<dbReference type="Proteomes" id="UP000001595">
    <property type="component" value="Chromosome 5"/>
</dbReference>
<dbReference type="GO" id="GO:0005829">
    <property type="term" value="C:cytosol"/>
    <property type="evidence" value="ECO:0007669"/>
    <property type="project" value="UniProtKB-SubCell"/>
</dbReference>
<dbReference type="GO" id="GO:0016787">
    <property type="term" value="F:hydrolase activity"/>
    <property type="evidence" value="ECO:0007669"/>
    <property type="project" value="UniProtKB-KW"/>
</dbReference>
<dbReference type="FunFam" id="3.40.50.1820:FF:000178">
    <property type="entry name" value="Carboxymethylenebutenolidase homolog"/>
    <property type="match status" value="1"/>
</dbReference>
<dbReference type="Gene3D" id="3.40.50.1820">
    <property type="entry name" value="alpha/beta hydrolase"/>
    <property type="match status" value="1"/>
</dbReference>
<dbReference type="InterPro" id="IPR029058">
    <property type="entry name" value="AB_hydrolase_fold"/>
</dbReference>
<dbReference type="InterPro" id="IPR042946">
    <property type="entry name" value="CMBL"/>
</dbReference>
<dbReference type="InterPro" id="IPR002925">
    <property type="entry name" value="Dienelactn_hydro"/>
</dbReference>
<dbReference type="PANTHER" id="PTHR46812">
    <property type="entry name" value="CARBOXYMETHYLENEBUTENOLIDASE HOMOLOG"/>
    <property type="match status" value="1"/>
</dbReference>
<dbReference type="PANTHER" id="PTHR46812:SF1">
    <property type="entry name" value="CARBOXYMETHYLENEBUTENOLIDASE HOMOLOG"/>
    <property type="match status" value="1"/>
</dbReference>
<dbReference type="Pfam" id="PF01738">
    <property type="entry name" value="DLH"/>
    <property type="match status" value="1"/>
</dbReference>
<dbReference type="SUPFAM" id="SSF53474">
    <property type="entry name" value="alpha/beta-Hydrolases"/>
    <property type="match status" value="1"/>
</dbReference>